<organism>
    <name type="scientific">Rotavirus A (strain RVA/Cow/United Kingdom/UK/1975/G6P7[5])</name>
    <name type="common">RV-A</name>
    <dbReference type="NCBI Taxonomy" id="10934"/>
    <lineage>
        <taxon>Viruses</taxon>
        <taxon>Riboviria</taxon>
        <taxon>Orthornavirae</taxon>
        <taxon>Duplornaviricota</taxon>
        <taxon>Resentoviricetes</taxon>
        <taxon>Reovirales</taxon>
        <taxon>Sedoreoviridae</taxon>
        <taxon>Rotavirus</taxon>
        <taxon>Rotavirus A</taxon>
    </lineage>
</organism>
<evidence type="ECO:0000255" key="1">
    <source>
        <dbReference type="HAMAP-Rule" id="MF_04128"/>
    </source>
</evidence>
<evidence type="ECO:0000269" key="2">
    <source>
    </source>
</evidence>
<evidence type="ECO:0000305" key="3"/>
<proteinExistence type="evidence at protein level"/>
<organismHost>
    <name type="scientific">Bos taurus</name>
    <name type="common">Bovine</name>
    <dbReference type="NCBI Taxonomy" id="9913"/>
</organismHost>
<name>VP3_ROTBU</name>
<reference key="1">
    <citation type="journal article" date="2004" name="J. Gen. Virol.">
        <title>Sequence analysis of the guanylyltransferase (VP3) of group A rotaviruses.</title>
        <authorList>
            <person name="Cook J.P."/>
            <person name="McCrae M.A."/>
        </authorList>
    </citation>
    <scope>NUCLEOTIDE SEQUENCE [GENOMIC RNA]</scope>
</reference>
<reference key="2">
    <citation type="journal article" date="2010" name="J. Mol. Biol.">
        <title>X-ray crystal structure of the rotavirus inner capsid particle at 3.8 A resolution.</title>
        <authorList>
            <person name="McClain B."/>
            <person name="Settembre E."/>
            <person name="Temple B.R."/>
            <person name="Bellamy A.R."/>
            <person name="Harrison S.C."/>
        </authorList>
    </citation>
    <scope>INTERACTION WITH RNA-DIRECTED RNA POLYMERASE VP1</scope>
    <scope>FUNCTION</scope>
    <scope>SUBCELLULAR LOCATION</scope>
</reference>
<protein>
    <recommendedName>
        <fullName evidence="1">Protein VP3</fullName>
    </recommendedName>
    <domain>
        <recommendedName>
            <fullName evidence="1">2',5'-phosphodiesterase</fullName>
            <ecNumber evidence="1">3.1.4.-</ecNumber>
        </recommendedName>
    </domain>
    <domain>
        <recommendedName>
            <fullName evidence="1">mRNA guanylyltransferase</fullName>
            <ecNumber evidence="1">2.7.7.50</ecNumber>
        </recommendedName>
    </domain>
    <domain>
        <recommendedName>
            <fullName evidence="1">mRNA (guanine-N(7))-methyltransferase</fullName>
            <ecNumber evidence="1">2.1.1.56</ecNumber>
        </recommendedName>
    </domain>
</protein>
<accession>Q6WAT6</accession>
<keyword id="KW-0342">GTP-binding</keyword>
<keyword id="KW-0945">Host-virus interaction</keyword>
<keyword id="KW-0378">Hydrolase</keyword>
<keyword id="KW-1090">Inhibition of host innate immune response by virus</keyword>
<keyword id="KW-0489">Methyltransferase</keyword>
<keyword id="KW-0506">mRNA capping</keyword>
<keyword id="KW-0507">mRNA processing</keyword>
<keyword id="KW-0511">Multifunctional enzyme</keyword>
<keyword id="KW-0547">Nucleotide-binding</keyword>
<keyword id="KW-0548">Nucleotidyltransferase</keyword>
<keyword id="KW-0694">RNA-binding</keyword>
<keyword id="KW-0949">S-adenosyl-L-methionine</keyword>
<keyword id="KW-0808">Transferase</keyword>
<keyword id="KW-0899">Viral immunoevasion</keyword>
<keyword id="KW-0946">Virion</keyword>
<comment type="function">
    <text evidence="1 2">Multifunctional enzyme involved in mRNA capping. Catalyzes the formation of the 5' cap structure on the viral plus-strand transcripts (By similarity). Specifically binds to GTP and displays guanylyltransferase and methyltransferase activities (By similarity). Has affinity for ssRNA but not for dsRNA (By similarity). Capping activity is non-specific and caps RNAs that initiate with either a G or an A residue (By similarity). Together with VP1 polymerase, forms a VP1-VP3 complex positioned near the channels situated at each of the five-fold vertices of the core (PubMed:20122940). Following infection, the outermost layer of the virus is lost, leaving a double-layered particle (DLP) made up of the core and VP6 shell (By similarity). VP1 then catalyzes the transcription of fully conservative plus-strand genomic RNAs that are capped by VP3 and extruded through the DLP's channels into the cytoplasm where they function as mRNAs for translation of viral proteins (By similarity). DLPs probably have an RNA triphosphatase activity as well, whereas open cores do not (By similarity).</text>
</comment>
<comment type="function">
    <text evidence="1">Counteracts the host innate immune response thanks to its phosphodiesterase that degrades the 5'-triphosphorylated, 2'-5' linked adenylate oligomers produced by the host cell IFN-inducible 2',5'-oligoadenylate synthetase (OAS). The host RNaseL is therefore not activated.</text>
</comment>
<comment type="catalytic activity">
    <reaction evidence="1">
        <text>a 5'-end diphospho-ribonucleoside in mRNA + GTP + H(+) = a 5'-end (5'-triphosphoguanosine)-ribonucleoside in mRNA + diphosphate</text>
        <dbReference type="Rhea" id="RHEA:67012"/>
        <dbReference type="Rhea" id="RHEA-COMP:17165"/>
        <dbReference type="Rhea" id="RHEA-COMP:17166"/>
        <dbReference type="ChEBI" id="CHEBI:15378"/>
        <dbReference type="ChEBI" id="CHEBI:33019"/>
        <dbReference type="ChEBI" id="CHEBI:37565"/>
        <dbReference type="ChEBI" id="CHEBI:167616"/>
        <dbReference type="ChEBI" id="CHEBI:167617"/>
        <dbReference type="EC" id="2.7.7.50"/>
    </reaction>
</comment>
<comment type="catalytic activity">
    <reaction evidence="1">
        <text>a 5'-end (5'-triphosphoguanosine)-ribonucleoside in mRNA + S-adenosyl-L-methionine = a 5'-end (N(7)-methyl 5'-triphosphoguanosine)-ribonucleoside in mRNA + S-adenosyl-L-homocysteine</text>
        <dbReference type="Rhea" id="RHEA:67008"/>
        <dbReference type="Rhea" id="RHEA-COMP:17166"/>
        <dbReference type="Rhea" id="RHEA-COMP:17167"/>
        <dbReference type="ChEBI" id="CHEBI:57856"/>
        <dbReference type="ChEBI" id="CHEBI:59789"/>
        <dbReference type="ChEBI" id="CHEBI:156461"/>
        <dbReference type="ChEBI" id="CHEBI:167617"/>
        <dbReference type="EC" id="2.1.1.56"/>
    </reaction>
</comment>
<comment type="catalytic activity">
    <reaction evidence="1">
        <text>5'-triphosphoadenylyl-(2'-&gt;5')-adenylyl-(2'-&gt;5')-adenosine + 2 H2O = 2 AMP + ATP + 2 H(+)</text>
        <dbReference type="Rhea" id="RHEA:45964"/>
        <dbReference type="ChEBI" id="CHEBI:15377"/>
        <dbReference type="ChEBI" id="CHEBI:15378"/>
        <dbReference type="ChEBI" id="CHEBI:30616"/>
        <dbReference type="ChEBI" id="CHEBI:67143"/>
        <dbReference type="ChEBI" id="CHEBI:456215"/>
    </reaction>
</comment>
<comment type="subunit">
    <text evidence="1 2">Interacts with VP1 (PubMed:20122940). Interacts with VP2 (By similarity).</text>
</comment>
<comment type="subcellular location">
    <subcellularLocation>
        <location evidence="1 2">Virion</location>
    </subcellularLocation>
    <text evidence="1 3">Attached inside the inner capsid as a minor component. There are about 11 to 12 copies per virion.</text>
</comment>
<comment type="domain">
    <text evidence="1">Contains a bipartite N7-methyltransferase domain, a 2'-O-methyltransferase domain and a GTase/RTPase domain. The C-terminus contains a phosphodiesterase domain that degrades the 5'-triphosphorylated, 2'-5' linked adenylate oligomers produced by the host cell in response to IFN stimulation.</text>
</comment>
<comment type="similarity">
    <text evidence="1 3">Belongs to the rotavirus VP3 family.</text>
</comment>
<feature type="chain" id="PRO_0000368074" description="Protein VP3">
    <location>
        <begin position="1"/>
        <end position="835"/>
    </location>
</feature>
<feature type="region of interest" description="N7-methyltransferase activity" evidence="1">
    <location>
        <begin position="171"/>
        <end position="245"/>
    </location>
</feature>
<feature type="region of interest" description="2'-O-methyltransferase activity" evidence="1">
    <location>
        <begin position="246"/>
        <end position="428"/>
    </location>
</feature>
<feature type="region of interest" description="N7-methyltransferase activity" evidence="1">
    <location>
        <begin position="429"/>
        <end position="555"/>
    </location>
</feature>
<feature type="region of interest" description="GTase/RTPase activity" evidence="1">
    <location>
        <begin position="556"/>
        <end position="692"/>
    </location>
</feature>
<feature type="region of interest" description="2'-5'-phosphodiesterase activity" evidence="1">
    <location>
        <begin position="693"/>
        <end position="835"/>
    </location>
</feature>
<feature type="active site" description="For 2'-5'-phosphodiesterase activity" evidence="1">
    <location>
        <position position="718"/>
    </location>
</feature>
<feature type="active site" description="For 2'-5'-phosphodiesterase activity" evidence="1">
    <location>
        <position position="720"/>
    </location>
</feature>
<feature type="active site" description="For 2'-5'-phosphodiesterase activity" evidence="1">
    <location>
        <position position="797"/>
    </location>
</feature>
<feature type="active site" description="For 2'-5'-phosphodiesterase activity" evidence="1">
    <location>
        <position position="799"/>
    </location>
</feature>
<dbReference type="EC" id="3.1.4.-" evidence="1"/>
<dbReference type="EC" id="2.7.7.50" evidence="1"/>
<dbReference type="EC" id="2.1.1.56" evidence="1"/>
<dbReference type="EMBL" id="AY300923">
    <property type="protein sequence ID" value="AAQ74387.1"/>
    <property type="molecule type" value="Genomic_RNA"/>
</dbReference>
<dbReference type="SMR" id="Q6WAT6"/>
<dbReference type="Proteomes" id="UP000008657">
    <property type="component" value="Genome"/>
</dbReference>
<dbReference type="GO" id="GO:0019013">
    <property type="term" value="C:viral nucleocapsid"/>
    <property type="evidence" value="ECO:0007669"/>
    <property type="project" value="UniProtKB-UniRule"/>
</dbReference>
<dbReference type="GO" id="GO:0005525">
    <property type="term" value="F:GTP binding"/>
    <property type="evidence" value="ECO:0007669"/>
    <property type="project" value="UniProtKB-UniRule"/>
</dbReference>
<dbReference type="GO" id="GO:0016787">
    <property type="term" value="F:hydrolase activity"/>
    <property type="evidence" value="ECO:0007669"/>
    <property type="project" value="UniProtKB-KW"/>
</dbReference>
<dbReference type="GO" id="GO:0004482">
    <property type="term" value="F:mRNA 5'-cap (guanine-N7-)-methyltransferase activity"/>
    <property type="evidence" value="ECO:0007669"/>
    <property type="project" value="UniProtKB-UniRule"/>
</dbReference>
<dbReference type="GO" id="GO:0004484">
    <property type="term" value="F:mRNA guanylyltransferase activity"/>
    <property type="evidence" value="ECO:0007669"/>
    <property type="project" value="UniProtKB-UniRule"/>
</dbReference>
<dbReference type="GO" id="GO:0003723">
    <property type="term" value="F:RNA binding"/>
    <property type="evidence" value="ECO:0007669"/>
    <property type="project" value="UniProtKB-UniRule"/>
</dbReference>
<dbReference type="GO" id="GO:0052170">
    <property type="term" value="P:symbiont-mediated suppression of host innate immune response"/>
    <property type="evidence" value="ECO:0007669"/>
    <property type="project" value="UniProtKB-KW"/>
</dbReference>
<dbReference type="GO" id="GO:0016032">
    <property type="term" value="P:viral process"/>
    <property type="evidence" value="ECO:0007669"/>
    <property type="project" value="UniProtKB-UniRule"/>
</dbReference>
<dbReference type="CDD" id="cd20757">
    <property type="entry name" value="capping_2-OMTase_Rotavirus"/>
    <property type="match status" value="1"/>
</dbReference>
<dbReference type="HAMAP" id="MF_04124">
    <property type="entry name" value="Rota_VP3"/>
    <property type="match status" value="1"/>
</dbReference>
<dbReference type="HAMAP" id="MF_04128">
    <property type="entry name" value="Rota_VP3_A"/>
    <property type="match status" value="1"/>
</dbReference>
<dbReference type="InterPro" id="IPR011181">
    <property type="entry name" value="VP3_Rotav"/>
</dbReference>
<dbReference type="Pfam" id="PF06929">
    <property type="entry name" value="Rotavirus_VP3"/>
    <property type="match status" value="1"/>
</dbReference>
<dbReference type="PIRSF" id="PIRSF004015">
    <property type="entry name" value="LigT_rotavirus"/>
    <property type="match status" value="1"/>
</dbReference>
<dbReference type="PROSITE" id="PS51589">
    <property type="entry name" value="SAM_MT56_VP3"/>
    <property type="match status" value="1"/>
</dbReference>
<sequence length="835" mass="98045">MKVLALRHSVAQVYADTQIYIHDETKDDYENAFFISNLTTHNILYLNYSVKTLQILNKSGIAAVEIQKMDKLFTLIRCNFTYDYIDDVVYLHDYSYYTNNEIRTDQHWVTKTNIEDYLLPGWKLTYVGYNGNDTRGHYNFSFKCQNAATDDDAIIEYIYSNELDFQNFILKKIKERMTTSLPIARLSNRVFRDKLFKTLVSDHSKIVNVGPRNESMFTFLDHPSIKQFSNGPYLVKDTIKLKQERWLGKRLSQFDIGQYKNYVKCINNLISIYDMYHEKPIIYMLGSAPSYWIHDVKQYSNLKFETWDPLDTPYSDLHHKELFYISDVTKLKDNSILYIDIRTDRENADWKTWRKIVEEQTVNNLNIAYKYLSTGKAKVCCVKMTAMDLELPISAKLLHHPTTEIRSEFYLIMDIWDSKNIKRFIPKGVLYSYINNIITENVFIQQPFKLKTLRNEYVVALYALSNDFNNREDVIKLINNQKNALITVRINNTFKDEPKVGFKDIYDWTFLPTDFETNESIITSYDGCLGVFGLSISLASKPTGNNHLFMLSGTNKYFNMDQFANHMSISRRSHQIRFSESATSYSGYIFRDLSNNNFNLIGTNVENSVSGHVYNALIYYRYNYSFDLKRWIYLHSTNKASIEGGRYYEHAPIELIYACRSAREFAKLQDDLTVLRYSNEIENYINKVYSITYADDPNYFIGIKFKNIPYEYDVKVPHLTFGVLNISDSMVPDVVVILKKFKSELFRMDVTTSYTYMLSDEIYVANVSGVLSTYFKLYNAFYKEQITFGQSRMFIPHITLSFSNKKVVRIDSTRLNIDFIYLRKIKGDTVFDMAE</sequence>